<name>TRMA_SHEPA</name>
<organism>
    <name type="scientific">Shewanella pealeana (strain ATCC 700345 / ANG-SQ1)</name>
    <dbReference type="NCBI Taxonomy" id="398579"/>
    <lineage>
        <taxon>Bacteria</taxon>
        <taxon>Pseudomonadati</taxon>
        <taxon>Pseudomonadota</taxon>
        <taxon>Gammaproteobacteria</taxon>
        <taxon>Alteromonadales</taxon>
        <taxon>Shewanellaceae</taxon>
        <taxon>Shewanella</taxon>
    </lineage>
</organism>
<evidence type="ECO:0000255" key="1">
    <source>
        <dbReference type="HAMAP-Rule" id="MF_01011"/>
    </source>
</evidence>
<proteinExistence type="inferred from homology"/>
<dbReference type="EC" id="2.1.1.-" evidence="1"/>
<dbReference type="EC" id="2.1.1.35" evidence="1"/>
<dbReference type="EMBL" id="CP000851">
    <property type="protein sequence ID" value="ABV85493.1"/>
    <property type="molecule type" value="Genomic_DNA"/>
</dbReference>
<dbReference type="RefSeq" id="WP_012153439.1">
    <property type="nucleotide sequence ID" value="NC_009901.1"/>
</dbReference>
<dbReference type="SMR" id="A8GYV6"/>
<dbReference type="STRING" id="398579.Spea_0164"/>
<dbReference type="KEGG" id="spl:Spea_0164"/>
<dbReference type="eggNOG" id="COG2265">
    <property type="taxonomic scope" value="Bacteria"/>
</dbReference>
<dbReference type="HOGENOM" id="CLU_043022_0_0_6"/>
<dbReference type="OrthoDB" id="9804590at2"/>
<dbReference type="Proteomes" id="UP000002608">
    <property type="component" value="Chromosome"/>
</dbReference>
<dbReference type="GO" id="GO:0005829">
    <property type="term" value="C:cytosol"/>
    <property type="evidence" value="ECO:0007669"/>
    <property type="project" value="TreeGrafter"/>
</dbReference>
<dbReference type="GO" id="GO:0019843">
    <property type="term" value="F:rRNA binding"/>
    <property type="evidence" value="ECO:0007669"/>
    <property type="project" value="TreeGrafter"/>
</dbReference>
<dbReference type="GO" id="GO:0030697">
    <property type="term" value="F:tRNA (uracil(54)-C5)-methyltransferase activity, S-adenosyl methionine-dependent"/>
    <property type="evidence" value="ECO:0007669"/>
    <property type="project" value="UniProtKB-UniRule"/>
</dbReference>
<dbReference type="GO" id="GO:0000049">
    <property type="term" value="F:tRNA binding"/>
    <property type="evidence" value="ECO:0007669"/>
    <property type="project" value="TreeGrafter"/>
</dbReference>
<dbReference type="GO" id="GO:0030488">
    <property type="term" value="P:tRNA methylation"/>
    <property type="evidence" value="ECO:0007669"/>
    <property type="project" value="UniProtKB-UniRule"/>
</dbReference>
<dbReference type="CDD" id="cd02440">
    <property type="entry name" value="AdoMet_MTases"/>
    <property type="match status" value="1"/>
</dbReference>
<dbReference type="FunFam" id="2.40.50.1070:FF:000001">
    <property type="entry name" value="tRNA/tmRNA (uracil-C(5))-methyltransferase"/>
    <property type="match status" value="1"/>
</dbReference>
<dbReference type="FunFam" id="3.40.50.150:FF:000012">
    <property type="entry name" value="tRNA/tmRNA (uracil-C(5))-methyltransferase"/>
    <property type="match status" value="1"/>
</dbReference>
<dbReference type="Gene3D" id="2.40.50.1070">
    <property type="match status" value="1"/>
</dbReference>
<dbReference type="Gene3D" id="3.40.50.150">
    <property type="entry name" value="Vaccinia Virus protein VP39"/>
    <property type="match status" value="1"/>
</dbReference>
<dbReference type="HAMAP" id="MF_01011">
    <property type="entry name" value="RNA_methyltr_TrmA"/>
    <property type="match status" value="1"/>
</dbReference>
<dbReference type="InterPro" id="IPR030390">
    <property type="entry name" value="MeTrfase_TrmA_AS"/>
</dbReference>
<dbReference type="InterPro" id="IPR030391">
    <property type="entry name" value="MeTrfase_TrmA_CS"/>
</dbReference>
<dbReference type="InterPro" id="IPR029063">
    <property type="entry name" value="SAM-dependent_MTases_sf"/>
</dbReference>
<dbReference type="InterPro" id="IPR011869">
    <property type="entry name" value="TrmA_MeTrfase"/>
</dbReference>
<dbReference type="InterPro" id="IPR010280">
    <property type="entry name" value="U5_MeTrfase_fam"/>
</dbReference>
<dbReference type="NCBIfam" id="TIGR02143">
    <property type="entry name" value="trmA_only"/>
    <property type="match status" value="1"/>
</dbReference>
<dbReference type="PANTHER" id="PTHR47790">
    <property type="entry name" value="TRNA/TMRNA (URACIL-C(5))-METHYLTRANSFERASE"/>
    <property type="match status" value="1"/>
</dbReference>
<dbReference type="PANTHER" id="PTHR47790:SF2">
    <property type="entry name" value="TRNA_TMRNA (URACIL-C(5))-METHYLTRANSFERASE"/>
    <property type="match status" value="1"/>
</dbReference>
<dbReference type="Pfam" id="PF05958">
    <property type="entry name" value="tRNA_U5-meth_tr"/>
    <property type="match status" value="1"/>
</dbReference>
<dbReference type="SUPFAM" id="SSF53335">
    <property type="entry name" value="S-adenosyl-L-methionine-dependent methyltransferases"/>
    <property type="match status" value="1"/>
</dbReference>
<dbReference type="PROSITE" id="PS51687">
    <property type="entry name" value="SAM_MT_RNA_M5U"/>
    <property type="match status" value="1"/>
</dbReference>
<dbReference type="PROSITE" id="PS01230">
    <property type="entry name" value="TRMA_1"/>
    <property type="match status" value="1"/>
</dbReference>
<dbReference type="PROSITE" id="PS01231">
    <property type="entry name" value="TRMA_2"/>
    <property type="match status" value="1"/>
</dbReference>
<reference key="1">
    <citation type="submission" date="2007-10" db="EMBL/GenBank/DDBJ databases">
        <title>Complete sequence of Shewanella pealeana ATCC 700345.</title>
        <authorList>
            <consortium name="US DOE Joint Genome Institute"/>
            <person name="Copeland A."/>
            <person name="Lucas S."/>
            <person name="Lapidus A."/>
            <person name="Barry K."/>
            <person name="Glavina del Rio T."/>
            <person name="Dalin E."/>
            <person name="Tice H."/>
            <person name="Pitluck S."/>
            <person name="Chertkov O."/>
            <person name="Brettin T."/>
            <person name="Bruce D."/>
            <person name="Detter J.C."/>
            <person name="Han C."/>
            <person name="Schmutz J."/>
            <person name="Larimer F."/>
            <person name="Land M."/>
            <person name="Hauser L."/>
            <person name="Kyrpides N."/>
            <person name="Kim E."/>
            <person name="Zhao J.-S.Z."/>
            <person name="Manno D."/>
            <person name="Hawari J."/>
            <person name="Richardson P."/>
        </authorList>
    </citation>
    <scope>NUCLEOTIDE SEQUENCE [LARGE SCALE GENOMIC DNA]</scope>
    <source>
        <strain>ATCC 700345 / ANG-SQ1</strain>
    </source>
</reference>
<keyword id="KW-0489">Methyltransferase</keyword>
<keyword id="KW-1185">Reference proteome</keyword>
<keyword id="KW-0949">S-adenosyl-L-methionine</keyword>
<keyword id="KW-0808">Transferase</keyword>
<keyword id="KW-0819">tRNA processing</keyword>
<sequence length="365" mass="42103">MNLAAMDPTTYDVQLEAKCVKLKQLFADFDTPELETFSSEPAHYRMRAEFRVWHEGEDLYYYMFDKELNSKVRCDQFLPASELINKMMPALVELLKPNTILRHRLFQIDFLSTLSGEILVSLLYHKQLDSEWEQQAKILKQTLSTQFNVNLIGRARKQKIIFDKDFVVESLNVAGKQLQYHQIENSFTQPNGKVSVKMLEWAIDITKNSSGDLLELYCGNGNFSIALAQNFERVLATELAKPSVESAQYNIKVNQVENLQIIRMSAEDFTEAMAKKRSFRRLEGIDLDSYNCNTIFVDPPRAGLDADTVKLVQGYERIVYISCNPNTLIDNLAELSKTHKITRFALFDQFPYTDHMESGVFLEKK</sequence>
<comment type="function">
    <text evidence="1">Dual-specificity methyltransferase that catalyzes the formation of 5-methyluridine at position 54 (m5U54) in all tRNAs, and that of position 341 (m5U341) in tmRNA (transfer-mRNA).</text>
</comment>
<comment type="catalytic activity">
    <reaction evidence="1">
        <text>uridine(54) in tRNA + S-adenosyl-L-methionine = 5-methyluridine(54) in tRNA + S-adenosyl-L-homocysteine + H(+)</text>
        <dbReference type="Rhea" id="RHEA:42712"/>
        <dbReference type="Rhea" id="RHEA-COMP:10167"/>
        <dbReference type="Rhea" id="RHEA-COMP:10193"/>
        <dbReference type="ChEBI" id="CHEBI:15378"/>
        <dbReference type="ChEBI" id="CHEBI:57856"/>
        <dbReference type="ChEBI" id="CHEBI:59789"/>
        <dbReference type="ChEBI" id="CHEBI:65315"/>
        <dbReference type="ChEBI" id="CHEBI:74447"/>
        <dbReference type="EC" id="2.1.1.35"/>
    </reaction>
</comment>
<comment type="catalytic activity">
    <reaction evidence="1">
        <text>uridine(341) in tmRNA + S-adenosyl-L-methionine = 5-methyluridine(341) in tmRNA + S-adenosyl-L-homocysteine + H(+)</text>
        <dbReference type="Rhea" id="RHEA:43612"/>
        <dbReference type="Rhea" id="RHEA-COMP:10630"/>
        <dbReference type="Rhea" id="RHEA-COMP:10631"/>
        <dbReference type="ChEBI" id="CHEBI:15378"/>
        <dbReference type="ChEBI" id="CHEBI:57856"/>
        <dbReference type="ChEBI" id="CHEBI:59789"/>
        <dbReference type="ChEBI" id="CHEBI:65315"/>
        <dbReference type="ChEBI" id="CHEBI:74447"/>
    </reaction>
</comment>
<comment type="similarity">
    <text evidence="1">Belongs to the class I-like SAM-binding methyltransferase superfamily. RNA M5U methyltransferase family. TrmA subfamily.</text>
</comment>
<gene>
    <name evidence="1" type="primary">trmA</name>
    <name type="ordered locus">Spea_0164</name>
</gene>
<accession>A8GYV6</accession>
<feature type="chain" id="PRO_1000084043" description="tRNA/tmRNA (uracil-C(5))-methyltransferase">
    <location>
        <begin position="1"/>
        <end position="365"/>
    </location>
</feature>
<feature type="active site" description="Nucleophile" evidence="1">
    <location>
        <position position="323"/>
    </location>
</feature>
<feature type="active site" description="Proton acceptor" evidence="1">
    <location>
        <position position="357"/>
    </location>
</feature>
<feature type="binding site" evidence="1">
    <location>
        <position position="189"/>
    </location>
    <ligand>
        <name>S-adenosyl-L-methionine</name>
        <dbReference type="ChEBI" id="CHEBI:59789"/>
    </ligand>
</feature>
<feature type="binding site" evidence="1">
    <location>
        <position position="217"/>
    </location>
    <ligand>
        <name>S-adenosyl-L-methionine</name>
        <dbReference type="ChEBI" id="CHEBI:59789"/>
    </ligand>
</feature>
<feature type="binding site" evidence="1">
    <location>
        <position position="222"/>
    </location>
    <ligand>
        <name>S-adenosyl-L-methionine</name>
        <dbReference type="ChEBI" id="CHEBI:59789"/>
    </ligand>
</feature>
<feature type="binding site" evidence="1">
    <location>
        <position position="238"/>
    </location>
    <ligand>
        <name>S-adenosyl-L-methionine</name>
        <dbReference type="ChEBI" id="CHEBI:59789"/>
    </ligand>
</feature>
<feature type="binding site" evidence="1">
    <location>
        <position position="298"/>
    </location>
    <ligand>
        <name>S-adenosyl-L-methionine</name>
        <dbReference type="ChEBI" id="CHEBI:59789"/>
    </ligand>
</feature>
<protein>
    <recommendedName>
        <fullName evidence="1">tRNA/tmRNA (uracil-C(5))-methyltransferase</fullName>
        <ecNumber evidence="1">2.1.1.-</ecNumber>
        <ecNumber evidence="1">2.1.1.35</ecNumber>
    </recommendedName>
    <alternativeName>
        <fullName evidence="1">tRNA (uracil(54)-C(5))-methyltransferase</fullName>
    </alternativeName>
    <alternativeName>
        <fullName evidence="1">tRNA(m5U54)-methyltransferase</fullName>
        <shortName evidence="1">RUMT</shortName>
    </alternativeName>
    <alternativeName>
        <fullName evidence="1">tmRNA (uracil(341)-C(5))-methyltransferase</fullName>
    </alternativeName>
</protein>